<feature type="chain" id="PRO_0000410184" description="Patatin-like phospholipase domain-containing protein CNBE2340">
    <location>
        <begin position="1"/>
        <end position="871"/>
    </location>
</feature>
<feature type="transmembrane region" description="Helical" evidence="2">
    <location>
        <begin position="68"/>
        <end position="88"/>
    </location>
</feature>
<feature type="domain" description="PNPLA" evidence="3">
    <location>
        <begin position="243"/>
        <end position="435"/>
    </location>
</feature>
<feature type="region of interest" description="Disordered" evidence="4">
    <location>
        <begin position="20"/>
        <end position="53"/>
    </location>
</feature>
<feature type="region of interest" description="Disordered" evidence="4">
    <location>
        <begin position="586"/>
        <end position="707"/>
    </location>
</feature>
<feature type="region of interest" description="Disordered" evidence="4">
    <location>
        <begin position="720"/>
        <end position="748"/>
    </location>
</feature>
<feature type="region of interest" description="Disordered" evidence="4">
    <location>
        <begin position="760"/>
        <end position="871"/>
    </location>
</feature>
<feature type="short sequence motif" description="GXSXG" evidence="3">
    <location>
        <begin position="274"/>
        <end position="278"/>
    </location>
</feature>
<feature type="compositionally biased region" description="Low complexity" evidence="4">
    <location>
        <begin position="23"/>
        <end position="33"/>
    </location>
</feature>
<feature type="compositionally biased region" description="Polar residues" evidence="4">
    <location>
        <begin position="594"/>
        <end position="606"/>
    </location>
</feature>
<feature type="compositionally biased region" description="Polar residues" evidence="4">
    <location>
        <begin position="687"/>
        <end position="706"/>
    </location>
</feature>
<feature type="compositionally biased region" description="Low complexity" evidence="4">
    <location>
        <begin position="721"/>
        <end position="748"/>
    </location>
</feature>
<feature type="compositionally biased region" description="Basic and acidic residues" evidence="4">
    <location>
        <begin position="798"/>
        <end position="820"/>
    </location>
</feature>
<feature type="active site" description="Nucleophile" evidence="3">
    <location>
        <position position="276"/>
    </location>
</feature>
<feature type="active site" description="Proton acceptor" evidence="3">
    <location>
        <position position="422"/>
    </location>
</feature>
<sequence length="871" mass="96690">MPPSPPSSAAADQWNIDYVNEDSPLSPRSFSLPPESPQLSTASPIHQRVSRKRQRATSQGLTYNVIRWPLLFFIFFIIYLEFSAYVITRQIVNVFEWLVAWRGYKAKLRKELRKAKTYDEWVNTAKKLDKHLGFDDWKDVEEDSYFDWALVRRVRRTLTRLRAANDTRGLMDALAVCVRANFAGTESVKMYSETFIGTKKAVEAHIKEVAACLDYVRTATDVSLEEKRAFFRAVNKHYGSSALCLSGGASFGYYHFGVIKAFLEADLLPRVITGTSAGGLCAALLCTRTDSELKELLVPELADKITACSDPFTVWFKRFRQTGARFDTIDWARRSMWFTRGSLTFKEAYTKTGRALNISVVPSDRHSPTILLNHLTAPNCLIWSAILASAAVPGILNPVVLMAKDRSGNIKPHNLGGSRFKDGSLREDIPLGSLHTQFNCNFSIVSQTNPHIHLFFFAPRGSVGRPVAHRKGKGWRGGFILSALESYIKLDLSKHFKVIRDLDLMPQILQSDWSGVFLQRFSGDLTLTPRSTIGDWFHILSDPDRPQMKRMLRVGERVAWPALGMVRNRMTVERAILRGRSEVRTALSHDRTSNDPATSLPETNPELTGALDHVPIESDVDAGFVSRSRRARNKTGSKGGDTPEEQLNLAGVFQLDESSKGVRRRKQKKSGMPLVAEPLGELPEVSPTHSPIATESPQRNYTSNFGDSFRHVRAPSLPALSSPFRSIRSNTSSSSNNVQSPSSSQRFRSQLSITRWFGGVSESSSDEEDEDLGGLQSGEATASSGEEGIPTFQLDSAVESHSDRSEDEMLHSGANVKEEYQSEESEGKIPIPGGERVTQEKIDASMASGERLRPAGGSKGSAKTPPVQDGA</sequence>
<organism>
    <name type="scientific">Cryptococcus neoformans var. neoformans serotype D (strain B-3501A)</name>
    <name type="common">Filobasidiella neoformans</name>
    <dbReference type="NCBI Taxonomy" id="283643"/>
    <lineage>
        <taxon>Eukaryota</taxon>
        <taxon>Fungi</taxon>
        <taxon>Dikarya</taxon>
        <taxon>Basidiomycota</taxon>
        <taxon>Agaricomycotina</taxon>
        <taxon>Tremellomycetes</taxon>
        <taxon>Tremellales</taxon>
        <taxon>Cryptococcaceae</taxon>
        <taxon>Cryptococcus</taxon>
        <taxon>Cryptococcus neoformans species complex</taxon>
    </lineage>
</organism>
<gene>
    <name type="ordered locus">CNBE2340</name>
</gene>
<dbReference type="EC" id="3.1.1.-"/>
<dbReference type="EMBL" id="AAEY01000024">
    <property type="protein sequence ID" value="EAL20873.1"/>
    <property type="status" value="ALT_SEQ"/>
    <property type="molecule type" value="Genomic_DNA"/>
</dbReference>
<dbReference type="RefSeq" id="XP_775520.1">
    <property type="nucleotide sequence ID" value="XM_770427.1"/>
</dbReference>
<dbReference type="GeneID" id="4936244"/>
<dbReference type="KEGG" id="cnb:CNBE2340"/>
<dbReference type="HOGENOM" id="CLU_009031_2_1_1"/>
<dbReference type="OrthoDB" id="5575at5206"/>
<dbReference type="GO" id="GO:0016020">
    <property type="term" value="C:membrane"/>
    <property type="evidence" value="ECO:0007669"/>
    <property type="project" value="UniProtKB-SubCell"/>
</dbReference>
<dbReference type="GO" id="GO:0004806">
    <property type="term" value="F:triacylglycerol lipase activity"/>
    <property type="evidence" value="ECO:0007669"/>
    <property type="project" value="InterPro"/>
</dbReference>
<dbReference type="GO" id="GO:0016042">
    <property type="term" value="P:lipid catabolic process"/>
    <property type="evidence" value="ECO:0007669"/>
    <property type="project" value="UniProtKB-KW"/>
</dbReference>
<dbReference type="GO" id="GO:0006641">
    <property type="term" value="P:triglyceride metabolic process"/>
    <property type="evidence" value="ECO:0007669"/>
    <property type="project" value="UniProtKB-ARBA"/>
</dbReference>
<dbReference type="CDD" id="cd07232">
    <property type="entry name" value="Pat_PLPL"/>
    <property type="match status" value="1"/>
</dbReference>
<dbReference type="Gene3D" id="3.40.1090.10">
    <property type="entry name" value="Cytosolic phospholipase A2 catalytic domain"/>
    <property type="match status" value="2"/>
</dbReference>
<dbReference type="InterPro" id="IPR016035">
    <property type="entry name" value="Acyl_Trfase/lysoPLipase"/>
</dbReference>
<dbReference type="InterPro" id="IPR050301">
    <property type="entry name" value="NTE"/>
</dbReference>
<dbReference type="InterPro" id="IPR002641">
    <property type="entry name" value="PNPLA_dom"/>
</dbReference>
<dbReference type="InterPro" id="IPR021771">
    <property type="entry name" value="Triacylglycerol_lipase_N"/>
</dbReference>
<dbReference type="PANTHER" id="PTHR14226">
    <property type="entry name" value="NEUROPATHY TARGET ESTERASE/SWISS CHEESE D.MELANOGASTER"/>
    <property type="match status" value="1"/>
</dbReference>
<dbReference type="PANTHER" id="PTHR14226:SF66">
    <property type="entry name" value="TRIACYLGLYCEROL LIPASE PTL2"/>
    <property type="match status" value="1"/>
</dbReference>
<dbReference type="Pfam" id="PF11815">
    <property type="entry name" value="DUF3336"/>
    <property type="match status" value="1"/>
</dbReference>
<dbReference type="Pfam" id="PF01734">
    <property type="entry name" value="Patatin"/>
    <property type="match status" value="1"/>
</dbReference>
<dbReference type="SUPFAM" id="SSF52151">
    <property type="entry name" value="FabD/lysophospholipase-like"/>
    <property type="match status" value="1"/>
</dbReference>
<dbReference type="PROSITE" id="PS51635">
    <property type="entry name" value="PNPLA"/>
    <property type="match status" value="1"/>
</dbReference>
<reference key="1">
    <citation type="journal article" date="2005" name="Science">
        <title>The genome of the basidiomycetous yeast and human pathogen Cryptococcus neoformans.</title>
        <authorList>
            <person name="Loftus B.J."/>
            <person name="Fung E."/>
            <person name="Roncaglia P."/>
            <person name="Rowley D."/>
            <person name="Amedeo P."/>
            <person name="Bruno D."/>
            <person name="Vamathevan J."/>
            <person name="Miranda M."/>
            <person name="Anderson I.J."/>
            <person name="Fraser J.A."/>
            <person name="Allen J.E."/>
            <person name="Bosdet I.E."/>
            <person name="Brent M.R."/>
            <person name="Chiu R."/>
            <person name="Doering T.L."/>
            <person name="Donlin M.J."/>
            <person name="D'Souza C.A."/>
            <person name="Fox D.S."/>
            <person name="Grinberg V."/>
            <person name="Fu J."/>
            <person name="Fukushima M."/>
            <person name="Haas B.J."/>
            <person name="Huang J.C."/>
            <person name="Janbon G."/>
            <person name="Jones S.J.M."/>
            <person name="Koo H.L."/>
            <person name="Krzywinski M.I."/>
            <person name="Kwon-Chung K.J."/>
            <person name="Lengeler K.B."/>
            <person name="Maiti R."/>
            <person name="Marra M.A."/>
            <person name="Marra R.E."/>
            <person name="Mathewson C.A."/>
            <person name="Mitchell T.G."/>
            <person name="Pertea M."/>
            <person name="Riggs F.R."/>
            <person name="Salzberg S.L."/>
            <person name="Schein J.E."/>
            <person name="Shvartsbeyn A."/>
            <person name="Shin H."/>
            <person name="Shumway M."/>
            <person name="Specht C.A."/>
            <person name="Suh B.B."/>
            <person name="Tenney A."/>
            <person name="Utterback T.R."/>
            <person name="Wickes B.L."/>
            <person name="Wortman J.R."/>
            <person name="Wye N.H."/>
            <person name="Kronstad J.W."/>
            <person name="Lodge J.K."/>
            <person name="Heitman J."/>
            <person name="Davis R.W."/>
            <person name="Fraser C.M."/>
            <person name="Hyman R.W."/>
        </authorList>
    </citation>
    <scope>NUCLEOTIDE SEQUENCE [LARGE SCALE GENOMIC DNA]</scope>
    <source>
        <strain>B-3501A</strain>
    </source>
</reference>
<evidence type="ECO:0000250" key="1"/>
<evidence type="ECO:0000255" key="2"/>
<evidence type="ECO:0000255" key="3">
    <source>
        <dbReference type="PROSITE-ProRule" id="PRU01161"/>
    </source>
</evidence>
<evidence type="ECO:0000256" key="4">
    <source>
        <dbReference type="SAM" id="MobiDB-lite"/>
    </source>
</evidence>
<evidence type="ECO:0000305" key="5"/>
<name>PLPL_CRYNB</name>
<protein>
    <recommendedName>
        <fullName>Patatin-like phospholipase domain-containing protein CNBE2340</fullName>
        <ecNumber>3.1.1.-</ecNumber>
    </recommendedName>
</protein>
<proteinExistence type="inferred from homology"/>
<accession>P0CP53</accession>
<accession>Q55SE8</accession>
<accession>Q5KGU2</accession>
<comment type="function">
    <text evidence="1">Probable lipid hydrolase.</text>
</comment>
<comment type="subcellular location">
    <subcellularLocation>
        <location evidence="5">Membrane</location>
        <topology evidence="5">Single-pass membrane protein</topology>
    </subcellularLocation>
</comment>
<comment type="similarity">
    <text evidence="5">Belongs to the PLPL family.</text>
</comment>
<comment type="sequence caution" evidence="5">
    <conflict type="erroneous gene model prediction">
        <sequence resource="EMBL-CDS" id="EAL20873"/>
    </conflict>
</comment>
<keyword id="KW-0378">Hydrolase</keyword>
<keyword id="KW-0442">Lipid degradation</keyword>
<keyword id="KW-0443">Lipid metabolism</keyword>
<keyword id="KW-0472">Membrane</keyword>
<keyword id="KW-0812">Transmembrane</keyword>
<keyword id="KW-1133">Transmembrane helix</keyword>